<feature type="chain" id="PRO_0000149707" description="Regulatory protein cro">
    <location>
        <begin position="1"/>
        <end position="71"/>
    </location>
</feature>
<feature type="domain" description="HTH cro/C1-type" evidence="1">
    <location>
        <begin position="8"/>
        <end position="61"/>
    </location>
</feature>
<feature type="DNA-binding region" description="H-T-H motif" evidence="1">
    <location>
        <begin position="19"/>
        <end position="38"/>
    </location>
</feature>
<feature type="helix" evidence="2">
    <location>
        <begin position="4"/>
        <end position="14"/>
    </location>
</feature>
<feature type="helix" evidence="2">
    <location>
        <begin position="19"/>
        <end position="26"/>
    </location>
</feature>
<feature type="helix" evidence="2">
    <location>
        <begin position="30"/>
        <end position="37"/>
    </location>
</feature>
<feature type="helix" evidence="2">
    <location>
        <begin position="47"/>
        <end position="53"/>
    </location>
</feature>
<feature type="helix" evidence="2">
    <location>
        <begin position="58"/>
        <end position="63"/>
    </location>
</feature>
<sequence length="71" mass="8063">MQTLSERLKKRRIALKMTQTELATKAGVKQQSIQLIEAGVTKRPRFLFEIAMALNCDPVWLQYGTKRGKAA</sequence>
<keyword id="KW-0002">3D-structure</keyword>
<keyword id="KW-0238">DNA-binding</keyword>
<keyword id="KW-0244">Early protein</keyword>
<keyword id="KW-0678">Repressor</keyword>
<keyword id="KW-0804">Transcription</keyword>
<keyword id="KW-0805">Transcription regulation</keyword>
<proteinExistence type="evidence at protein level"/>
<accession>P03036</accession>
<gene>
    <name type="primary">CRO</name>
</gene>
<organismHost>
    <name type="scientific">Escherichia coli</name>
    <dbReference type="NCBI Taxonomy" id="562"/>
</organismHost>
<dbReference type="EMBL" id="V00635">
    <property type="protein sequence ID" value="CAA23908.1"/>
    <property type="molecule type" value="Genomic_DNA"/>
</dbReference>
<dbReference type="EMBL" id="J02460">
    <property type="protein sequence ID" value="AAA32245.1"/>
    <property type="molecule type" value="Genomic_DNA"/>
</dbReference>
<dbReference type="PIR" id="A03572">
    <property type="entry name" value="RCBP4"/>
</dbReference>
<dbReference type="PDB" id="1ZUG">
    <property type="method" value="NMR"/>
    <property type="chains" value="A=1-71"/>
</dbReference>
<dbReference type="PDB" id="2CRO">
    <property type="method" value="X-ray"/>
    <property type="resolution" value="2.35 A"/>
    <property type="chains" value="A=1-71"/>
</dbReference>
<dbReference type="PDB" id="3CRO">
    <property type="method" value="X-ray"/>
    <property type="resolution" value="2.50 A"/>
    <property type="chains" value="L/R=1-71"/>
</dbReference>
<dbReference type="PDBsum" id="1ZUG"/>
<dbReference type="PDBsum" id="2CRO"/>
<dbReference type="PDBsum" id="3CRO"/>
<dbReference type="SMR" id="P03036"/>
<dbReference type="EvolutionaryTrace" id="P03036"/>
<dbReference type="GO" id="GO:0003677">
    <property type="term" value="F:DNA binding"/>
    <property type="evidence" value="ECO:0007669"/>
    <property type="project" value="UniProtKB-KW"/>
</dbReference>
<dbReference type="GO" id="GO:0006355">
    <property type="term" value="P:regulation of DNA-templated transcription"/>
    <property type="evidence" value="ECO:0007669"/>
    <property type="project" value="InterPro"/>
</dbReference>
<dbReference type="CDD" id="cd00093">
    <property type="entry name" value="HTH_XRE"/>
    <property type="match status" value="1"/>
</dbReference>
<dbReference type="Gene3D" id="1.10.260.40">
    <property type="entry name" value="lambda repressor-like DNA-binding domains"/>
    <property type="match status" value="1"/>
</dbReference>
<dbReference type="InterPro" id="IPR000655">
    <property type="entry name" value="Cro-like"/>
</dbReference>
<dbReference type="InterPro" id="IPR001387">
    <property type="entry name" value="Cro/C1-type_HTH"/>
</dbReference>
<dbReference type="InterPro" id="IPR010982">
    <property type="entry name" value="Lambda_DNA-bd_dom_sf"/>
</dbReference>
<dbReference type="Pfam" id="PF01381">
    <property type="entry name" value="HTH_3"/>
    <property type="match status" value="1"/>
</dbReference>
<dbReference type="PRINTS" id="PR00030">
    <property type="entry name" value="HTHCRO"/>
</dbReference>
<dbReference type="SMART" id="SM00530">
    <property type="entry name" value="HTH_XRE"/>
    <property type="match status" value="1"/>
</dbReference>
<dbReference type="SUPFAM" id="SSF47413">
    <property type="entry name" value="lambda repressor-like DNA-binding domains"/>
    <property type="match status" value="1"/>
</dbReference>
<dbReference type="PROSITE" id="PS50943">
    <property type="entry name" value="HTH_CROC1"/>
    <property type="match status" value="1"/>
</dbReference>
<organism>
    <name type="scientific">Enterobacteria phage 434</name>
    <name type="common">Bacteriophage 434</name>
    <dbReference type="NCBI Taxonomy" id="10712"/>
    <lineage>
        <taxon>Viruses</taxon>
        <taxon>Duplodnaviria</taxon>
        <taxon>Heunggongvirae</taxon>
        <taxon>Uroviricota</taxon>
        <taxon>Caudoviricetes</taxon>
        <taxon>Lambdavirus</taxon>
        <taxon>Lambdavirus lambda</taxon>
    </lineage>
</organism>
<evidence type="ECO:0000255" key="1">
    <source>
        <dbReference type="PROSITE-ProRule" id="PRU00257"/>
    </source>
</evidence>
<evidence type="ECO:0007829" key="2">
    <source>
        <dbReference type="PDB" id="2CRO"/>
    </source>
</evidence>
<name>RCRO_BP434</name>
<protein>
    <recommendedName>
        <fullName>Regulatory protein cro</fullName>
    </recommendedName>
    <alternativeName>
        <fullName>Antirepressor</fullName>
    </alternativeName>
</protein>
<comment type="function">
    <text>Cro represses genes normally expressed in early phage development and is necessary for the late stage of lytic growth. It does this by binding to the OL and OR operators regions normally used by the repressor protein for lysogenic maintenance.</text>
</comment>
<reference key="1">
    <citation type="journal article" date="1979" name="Nucleic Acids Res.">
        <title>Nucleotide sequence of the cro-cII-oop region of bacteriophage 434 DNA.</title>
        <authorList>
            <person name="Grosschedl R."/>
            <person name="Schwarz E."/>
        </authorList>
    </citation>
    <scope>NUCLEOTIDE SEQUENCE [GENOMIC DNA]</scope>
</reference>
<reference key="2">
    <citation type="journal article" date="1989" name="J. Mol. Biol.">
        <title>Structure of phage 434 Cro protein at 2.35-A resolution.</title>
        <authorList>
            <person name="Mondragon A."/>
            <person name="Wolberger C."/>
            <person name="Harrison S.C."/>
        </authorList>
    </citation>
    <scope>X-RAY CRYSTALLOGRAPHY (2.35 ANGSTROMS)</scope>
</reference>
<reference key="3">
    <citation type="journal article" date="1991" name="J. Mol. Biol.">
        <title>The phage 434 Cro/OR1 complex at 2.5-A resolution.</title>
        <authorList>
            <person name="Mondragon A."/>
            <person name="Harrison S.C."/>
        </authorList>
    </citation>
    <scope>X-RAY CRYSTALLOGRAPHY (2.5 ANGSTROMS)</scope>
</reference>
<reference key="4">
    <citation type="journal article" date="1997" name="Biochemistry">
        <title>Three-dimensional solution structure and stability of phage 434 Cro protein.</title>
        <authorList>
            <person name="Padmanabhan S."/>
            <person name="Jimenez M.A."/>
            <person name="Gonzalez C."/>
            <person name="Sanz J.M."/>
            <person name="Gimenez-Gallego G."/>
            <person name="Rico M."/>
        </authorList>
    </citation>
    <scope>STRUCTURE BY NMR</scope>
</reference>